<feature type="chain" id="PRO_1000020913" description="Protease HtpX">
    <location>
        <begin position="1"/>
        <end position="291"/>
    </location>
</feature>
<feature type="transmembrane region" description="Helical" evidence="1">
    <location>
        <begin position="4"/>
        <end position="24"/>
    </location>
</feature>
<feature type="transmembrane region" description="Helical" evidence="1">
    <location>
        <begin position="36"/>
        <end position="56"/>
    </location>
</feature>
<feature type="transmembrane region" description="Helical" evidence="1">
    <location>
        <begin position="150"/>
        <end position="170"/>
    </location>
</feature>
<feature type="transmembrane region" description="Helical" evidence="1">
    <location>
        <begin position="193"/>
        <end position="213"/>
    </location>
</feature>
<feature type="active site" evidence="1">
    <location>
        <position position="143"/>
    </location>
</feature>
<feature type="binding site" evidence="1">
    <location>
        <position position="142"/>
    </location>
    <ligand>
        <name>Zn(2+)</name>
        <dbReference type="ChEBI" id="CHEBI:29105"/>
        <note>catalytic</note>
    </ligand>
</feature>
<feature type="binding site" evidence="1">
    <location>
        <position position="146"/>
    </location>
    <ligand>
        <name>Zn(2+)</name>
        <dbReference type="ChEBI" id="CHEBI:29105"/>
        <note>catalytic</note>
    </ligand>
</feature>
<feature type="binding site" evidence="1">
    <location>
        <position position="219"/>
    </location>
    <ligand>
        <name>Zn(2+)</name>
        <dbReference type="ChEBI" id="CHEBI:29105"/>
        <note>catalytic</note>
    </ligand>
</feature>
<name>HTPX_PSEAB</name>
<evidence type="ECO:0000255" key="1">
    <source>
        <dbReference type="HAMAP-Rule" id="MF_00188"/>
    </source>
</evidence>
<proteinExistence type="inferred from homology"/>
<keyword id="KW-0997">Cell inner membrane</keyword>
<keyword id="KW-1003">Cell membrane</keyword>
<keyword id="KW-0378">Hydrolase</keyword>
<keyword id="KW-0472">Membrane</keyword>
<keyword id="KW-0479">Metal-binding</keyword>
<keyword id="KW-0482">Metalloprotease</keyword>
<keyword id="KW-0645">Protease</keyword>
<keyword id="KW-0346">Stress response</keyword>
<keyword id="KW-0812">Transmembrane</keyword>
<keyword id="KW-1133">Transmembrane helix</keyword>
<keyword id="KW-0862">Zinc</keyword>
<gene>
    <name evidence="1" type="primary">htpX</name>
    <name type="ordered locus">PA14_27480</name>
</gene>
<comment type="cofactor">
    <cofactor evidence="1">
        <name>Zn(2+)</name>
        <dbReference type="ChEBI" id="CHEBI:29105"/>
    </cofactor>
    <text evidence="1">Binds 1 zinc ion per subunit.</text>
</comment>
<comment type="subcellular location">
    <subcellularLocation>
        <location evidence="1">Cell inner membrane</location>
        <topology evidence="1">Multi-pass membrane protein</topology>
    </subcellularLocation>
</comment>
<comment type="similarity">
    <text evidence="1">Belongs to the peptidase M48B family.</text>
</comment>
<protein>
    <recommendedName>
        <fullName evidence="1">Protease HtpX</fullName>
        <ecNumber evidence="1">3.4.24.-</ecNumber>
    </recommendedName>
    <alternativeName>
        <fullName evidence="1">Heat shock protein HtpX</fullName>
    </alternativeName>
</protein>
<organism>
    <name type="scientific">Pseudomonas aeruginosa (strain UCBPP-PA14)</name>
    <dbReference type="NCBI Taxonomy" id="208963"/>
    <lineage>
        <taxon>Bacteria</taxon>
        <taxon>Pseudomonadati</taxon>
        <taxon>Pseudomonadota</taxon>
        <taxon>Gammaproteobacteria</taxon>
        <taxon>Pseudomonadales</taxon>
        <taxon>Pseudomonadaceae</taxon>
        <taxon>Pseudomonas</taxon>
    </lineage>
</organism>
<reference key="1">
    <citation type="journal article" date="2006" name="Genome Biol.">
        <title>Genomic analysis reveals that Pseudomonas aeruginosa virulence is combinatorial.</title>
        <authorList>
            <person name="Lee D.G."/>
            <person name="Urbach J.M."/>
            <person name="Wu G."/>
            <person name="Liberati N.T."/>
            <person name="Feinbaum R.L."/>
            <person name="Miyata S."/>
            <person name="Diggins L.T."/>
            <person name="He J."/>
            <person name="Saucier M."/>
            <person name="Deziel E."/>
            <person name="Friedman L."/>
            <person name="Li L."/>
            <person name="Grills G."/>
            <person name="Montgomery K."/>
            <person name="Kucherlapati R."/>
            <person name="Rahme L.G."/>
            <person name="Ausubel F.M."/>
        </authorList>
    </citation>
    <scope>NUCLEOTIDE SEQUENCE [LARGE SCALE GENOMIC DNA]</scope>
    <source>
        <strain>UCBPP-PA14</strain>
    </source>
</reference>
<accession>Q02NZ3</accession>
<dbReference type="EC" id="3.4.24.-" evidence="1"/>
<dbReference type="EMBL" id="CP000438">
    <property type="protein sequence ID" value="ABJ12070.1"/>
    <property type="molecule type" value="Genomic_DNA"/>
</dbReference>
<dbReference type="RefSeq" id="WP_003090915.1">
    <property type="nucleotide sequence ID" value="NZ_CP034244.1"/>
</dbReference>
<dbReference type="SMR" id="Q02NZ3"/>
<dbReference type="MEROPS" id="M48.002"/>
<dbReference type="GeneID" id="77220667"/>
<dbReference type="KEGG" id="pau:PA14_27480"/>
<dbReference type="PseudoCAP" id="PA14_27480"/>
<dbReference type="HOGENOM" id="CLU_042266_1_0_6"/>
<dbReference type="BioCyc" id="PAER208963:G1G74-2283-MONOMER"/>
<dbReference type="Proteomes" id="UP000000653">
    <property type="component" value="Chromosome"/>
</dbReference>
<dbReference type="GO" id="GO:0005886">
    <property type="term" value="C:plasma membrane"/>
    <property type="evidence" value="ECO:0007669"/>
    <property type="project" value="UniProtKB-SubCell"/>
</dbReference>
<dbReference type="GO" id="GO:0004222">
    <property type="term" value="F:metalloendopeptidase activity"/>
    <property type="evidence" value="ECO:0007669"/>
    <property type="project" value="UniProtKB-UniRule"/>
</dbReference>
<dbReference type="GO" id="GO:0008270">
    <property type="term" value="F:zinc ion binding"/>
    <property type="evidence" value="ECO:0007669"/>
    <property type="project" value="UniProtKB-UniRule"/>
</dbReference>
<dbReference type="GO" id="GO:0006508">
    <property type="term" value="P:proteolysis"/>
    <property type="evidence" value="ECO:0007669"/>
    <property type="project" value="UniProtKB-KW"/>
</dbReference>
<dbReference type="CDD" id="cd07335">
    <property type="entry name" value="M48B_HtpX_like"/>
    <property type="match status" value="1"/>
</dbReference>
<dbReference type="Gene3D" id="3.30.2010.10">
    <property type="entry name" value="Metalloproteases ('zincins'), catalytic domain"/>
    <property type="match status" value="1"/>
</dbReference>
<dbReference type="HAMAP" id="MF_00188">
    <property type="entry name" value="Pept_M48_protease_HtpX"/>
    <property type="match status" value="1"/>
</dbReference>
<dbReference type="InterPro" id="IPR050083">
    <property type="entry name" value="HtpX_protease"/>
</dbReference>
<dbReference type="InterPro" id="IPR022919">
    <property type="entry name" value="Pept_M48_protease_HtpX"/>
</dbReference>
<dbReference type="InterPro" id="IPR001915">
    <property type="entry name" value="Peptidase_M48"/>
</dbReference>
<dbReference type="NCBIfam" id="NF003965">
    <property type="entry name" value="PRK05457.1"/>
    <property type="match status" value="1"/>
</dbReference>
<dbReference type="PANTHER" id="PTHR43221">
    <property type="entry name" value="PROTEASE HTPX"/>
    <property type="match status" value="1"/>
</dbReference>
<dbReference type="PANTHER" id="PTHR43221:SF1">
    <property type="entry name" value="PROTEASE HTPX"/>
    <property type="match status" value="1"/>
</dbReference>
<dbReference type="Pfam" id="PF01435">
    <property type="entry name" value="Peptidase_M48"/>
    <property type="match status" value="1"/>
</dbReference>
<sequence length="291" mass="31593">MMRILLFLATNLAVLVIASITLKLLGVDRFTGQNYGSLLVFCAVFGFAGSLVSLFISKWMAKMSTGTEVISQPRTRHEQWLLQTVEELSREAGIKMPEVGIFPAYEANAFATGWNKNDALVAVSQGLLERFSPDEVKAVLAHEIGHVANGDMVTLALIQGVVNTFVMFFARIFGNFVDKAILKNEDGPGIGYFVATIFAELVLGILASIIVMWFSRRREFRADAAGAHLAGTGAMIAALQRLRSEQGVPVQMPDTLNAFGINGGLKHGLAGLLMSHPPLEDRIEALRASAR</sequence>